<keyword id="KW-0053">Apoptosis</keyword>
<keyword id="KW-1003">Cell membrane</keyword>
<keyword id="KW-0963">Cytoplasm</keyword>
<keyword id="KW-0472">Membrane</keyword>
<keyword id="KW-0653">Protein transport</keyword>
<keyword id="KW-1185">Reference proteome</keyword>
<keyword id="KW-0813">Transport</keyword>
<protein>
    <recommendedName>
        <fullName>AKT-interacting protein</fullName>
    </recommendedName>
    <alternativeName>
        <fullName>Fused toes protein homolog</fullName>
    </alternativeName>
</protein>
<organism>
    <name type="scientific">Xenopus tropicalis</name>
    <name type="common">Western clawed frog</name>
    <name type="synonym">Silurana tropicalis</name>
    <dbReference type="NCBI Taxonomy" id="8364"/>
    <lineage>
        <taxon>Eukaryota</taxon>
        <taxon>Metazoa</taxon>
        <taxon>Chordata</taxon>
        <taxon>Craniata</taxon>
        <taxon>Vertebrata</taxon>
        <taxon>Euteleostomi</taxon>
        <taxon>Amphibia</taxon>
        <taxon>Batrachia</taxon>
        <taxon>Anura</taxon>
        <taxon>Pipoidea</taxon>
        <taxon>Pipidae</taxon>
        <taxon>Xenopodinae</taxon>
        <taxon>Xenopus</taxon>
        <taxon>Silurana</taxon>
    </lineage>
</organism>
<gene>
    <name type="primary">aktip</name>
    <name type="synonym">fts</name>
    <name type="ORF">TEgg032d16.1</name>
</gene>
<name>AKTIP_XENTR</name>
<sequence>MNPFWNMSSAAVRKRSDNDEKIATGDQKISPPRSSSAKKQLPSIPKNAVPITKPISPSPSVQPTNGTHASYGPFYLEYSLLAEFTLVVKQKLPGVYVQPSYRSALMWFGVIFIRHGLYQDGVFKFTVYIPDNYPDGECPRLVFDVPVFHPLVDPVSGELDVKRAFTKWRRNHNHIWQVLMYARRIFYKIDTTSPLNPEAAVLYEKDVQLFKSKVVDSVKLCNSHLFDQPKIEDPYAIIFSPWNPVLHDDARERMLAQKKSEEQSKGLHVSGLSWVKPGSVLPFSKEENSLQT</sequence>
<reference key="1">
    <citation type="submission" date="2006-10" db="EMBL/GenBank/DDBJ databases">
        <authorList>
            <consortium name="Sanger Xenopus tropicalis EST/cDNA project"/>
        </authorList>
    </citation>
    <scope>NUCLEOTIDE SEQUENCE [LARGE SCALE MRNA]</scope>
    <source>
        <tissue>Egg</tissue>
    </source>
</reference>
<reference key="2">
    <citation type="submission" date="2008-04" db="EMBL/GenBank/DDBJ databases">
        <authorList>
            <consortium name="NIH - Xenopus Gene Collection (XGC) project"/>
        </authorList>
    </citation>
    <scope>NUCLEOTIDE SEQUENCE [LARGE SCALE MRNA]</scope>
    <source>
        <tissue>Gastrula</tissue>
        <tissue>Testis</tissue>
    </source>
</reference>
<accession>Q28IA3</accession>
<evidence type="ECO:0000250" key="1"/>
<evidence type="ECO:0000255" key="2">
    <source>
        <dbReference type="PROSITE-ProRule" id="PRU00388"/>
    </source>
</evidence>
<evidence type="ECO:0000256" key="3">
    <source>
        <dbReference type="SAM" id="MobiDB-lite"/>
    </source>
</evidence>
<evidence type="ECO:0000305" key="4"/>
<comment type="function">
    <text evidence="1">May function to promote vesicle trafficking and/or fusion. May also regulate apoptosis (By similarity).</text>
</comment>
<comment type="subcellular location">
    <subcellularLocation>
        <location evidence="1">Cytoplasm</location>
    </subcellularLocation>
    <subcellularLocation>
        <location evidence="1">Cell membrane</location>
        <topology evidence="1">Peripheral membrane protein</topology>
    </subcellularLocation>
</comment>
<comment type="similarity">
    <text evidence="2">Belongs to the ubiquitin-conjugating enzyme family. FTS subfamily.</text>
</comment>
<comment type="caution">
    <text evidence="4">Lacks the conserved Cys residue necessary for ubiquitin-conjugating enzyme E2 activity.</text>
</comment>
<feature type="chain" id="PRO_0000379024" description="AKT-interacting protein">
    <location>
        <begin position="1"/>
        <end position="292"/>
    </location>
</feature>
<feature type="domain" description="UBC core" evidence="2">
    <location>
        <begin position="75"/>
        <end position="223"/>
    </location>
</feature>
<feature type="region of interest" description="Disordered" evidence="3">
    <location>
        <begin position="1"/>
        <end position="64"/>
    </location>
</feature>
<feature type="region of interest" description="Disordered" evidence="3">
    <location>
        <begin position="273"/>
        <end position="292"/>
    </location>
</feature>
<feature type="compositionally biased region" description="Basic and acidic residues" evidence="3">
    <location>
        <begin position="14"/>
        <end position="23"/>
    </location>
</feature>
<proteinExistence type="evidence at transcript level"/>
<dbReference type="EMBL" id="CR760509">
    <property type="protein sequence ID" value="CAJ81886.1"/>
    <property type="molecule type" value="mRNA"/>
</dbReference>
<dbReference type="EMBL" id="BC166144">
    <property type="protein sequence ID" value="AAI66144.1"/>
    <property type="molecule type" value="mRNA"/>
</dbReference>
<dbReference type="EMBL" id="BC170870">
    <property type="protein sequence ID" value="AAI70870.1"/>
    <property type="molecule type" value="mRNA"/>
</dbReference>
<dbReference type="EMBL" id="BC171017">
    <property type="protein sequence ID" value="AAI71017.1"/>
    <property type="molecule type" value="mRNA"/>
</dbReference>
<dbReference type="RefSeq" id="NP_001017203.1">
    <property type="nucleotide sequence ID" value="NM_001017203.3"/>
</dbReference>
<dbReference type="SMR" id="Q28IA3"/>
<dbReference type="FunCoup" id="Q28IA3">
    <property type="interactions" value="1633"/>
</dbReference>
<dbReference type="STRING" id="8364.ENSXETP00000029326"/>
<dbReference type="PaxDb" id="8364-ENSXETP00000017728"/>
<dbReference type="DNASU" id="549957"/>
<dbReference type="GeneID" id="549957"/>
<dbReference type="KEGG" id="xtr:549957"/>
<dbReference type="AGR" id="Xenbase:XB-GENE-5735786"/>
<dbReference type="CTD" id="64400"/>
<dbReference type="Xenbase" id="XB-GENE-5735786">
    <property type="gene designation" value="aktip"/>
</dbReference>
<dbReference type="eggNOG" id="KOG0429">
    <property type="taxonomic scope" value="Eukaryota"/>
</dbReference>
<dbReference type="HOGENOM" id="CLU_083049_0_0_1"/>
<dbReference type="InParanoid" id="Q28IA3"/>
<dbReference type="OrthoDB" id="5596422at2759"/>
<dbReference type="TreeFam" id="TF314386"/>
<dbReference type="Proteomes" id="UP000008143">
    <property type="component" value="Chromosome 4"/>
</dbReference>
<dbReference type="GO" id="GO:0070695">
    <property type="term" value="C:FHF complex"/>
    <property type="evidence" value="ECO:0000250"/>
    <property type="project" value="UniProtKB"/>
</dbReference>
<dbReference type="GO" id="GO:0005886">
    <property type="term" value="C:plasma membrane"/>
    <property type="evidence" value="ECO:0007669"/>
    <property type="project" value="UniProtKB-SubCell"/>
</dbReference>
<dbReference type="GO" id="GO:0006915">
    <property type="term" value="P:apoptotic process"/>
    <property type="evidence" value="ECO:0007669"/>
    <property type="project" value="UniProtKB-KW"/>
</dbReference>
<dbReference type="GO" id="GO:0045022">
    <property type="term" value="P:early endosome to late endosome transport"/>
    <property type="evidence" value="ECO:0000250"/>
    <property type="project" value="UniProtKB"/>
</dbReference>
<dbReference type="GO" id="GO:0007032">
    <property type="term" value="P:endosome organization"/>
    <property type="evidence" value="ECO:0000250"/>
    <property type="project" value="UniProtKB"/>
</dbReference>
<dbReference type="GO" id="GO:0008333">
    <property type="term" value="P:endosome to lysosome transport"/>
    <property type="evidence" value="ECO:0000250"/>
    <property type="project" value="UniProtKB"/>
</dbReference>
<dbReference type="GO" id="GO:0007040">
    <property type="term" value="P:lysosome organization"/>
    <property type="evidence" value="ECO:0000250"/>
    <property type="project" value="UniProtKB"/>
</dbReference>
<dbReference type="GO" id="GO:0015031">
    <property type="term" value="P:protein transport"/>
    <property type="evidence" value="ECO:0007669"/>
    <property type="project" value="UniProtKB-KW"/>
</dbReference>
<dbReference type="CDD" id="cd23814">
    <property type="entry name" value="UEV_AKTIP"/>
    <property type="match status" value="1"/>
</dbReference>
<dbReference type="FunFam" id="3.10.110.10:FF:000030">
    <property type="entry name" value="AKT-interacting protein-like isoform X2"/>
    <property type="match status" value="1"/>
</dbReference>
<dbReference type="Gene3D" id="3.10.110.10">
    <property type="entry name" value="Ubiquitin Conjugating Enzyme"/>
    <property type="match status" value="1"/>
</dbReference>
<dbReference type="InterPro" id="IPR050113">
    <property type="entry name" value="Ub_conjugating_enzyme"/>
</dbReference>
<dbReference type="InterPro" id="IPR000608">
    <property type="entry name" value="UBQ-conjugat_E2_core"/>
</dbReference>
<dbReference type="InterPro" id="IPR016135">
    <property type="entry name" value="UBQ-conjugating_enzyme/RWD"/>
</dbReference>
<dbReference type="PANTHER" id="PTHR24067">
    <property type="entry name" value="UBIQUITIN-CONJUGATING ENZYME E2"/>
    <property type="match status" value="1"/>
</dbReference>
<dbReference type="Pfam" id="PF00179">
    <property type="entry name" value="UQ_con"/>
    <property type="match status" value="1"/>
</dbReference>
<dbReference type="SMART" id="SM00212">
    <property type="entry name" value="UBCc"/>
    <property type="match status" value="1"/>
</dbReference>
<dbReference type="SUPFAM" id="SSF54495">
    <property type="entry name" value="UBC-like"/>
    <property type="match status" value="1"/>
</dbReference>
<dbReference type="PROSITE" id="PS50127">
    <property type="entry name" value="UBC_2"/>
    <property type="match status" value="1"/>
</dbReference>